<feature type="chain" id="PRO_1000189730" description="Zinc transport protein ZntB">
    <location>
        <begin position="1"/>
        <end position="327"/>
    </location>
</feature>
<feature type="topological domain" description="Cytoplasmic" evidence="1">
    <location>
        <begin position="1"/>
        <end position="273"/>
    </location>
</feature>
<feature type="transmembrane region" description="Helical" evidence="1">
    <location>
        <begin position="274"/>
        <end position="294"/>
    </location>
</feature>
<feature type="topological domain" description="Periplasmic" evidence="1">
    <location>
        <begin position="295"/>
        <end position="300"/>
    </location>
</feature>
<feature type="transmembrane region" description="Helical" evidence="1">
    <location>
        <begin position="301"/>
        <end position="321"/>
    </location>
</feature>
<feature type="topological domain" description="Cytoplasmic" evidence="1">
    <location>
        <begin position="322"/>
        <end position="327"/>
    </location>
</feature>
<dbReference type="EMBL" id="CP001127">
    <property type="protein sequence ID" value="ACF91743.1"/>
    <property type="molecule type" value="Genomic_DNA"/>
</dbReference>
<dbReference type="RefSeq" id="WP_000387373.1">
    <property type="nucleotide sequence ID" value="NC_011094.1"/>
</dbReference>
<dbReference type="SMR" id="B4TWA8"/>
<dbReference type="KEGG" id="sew:SeSA_A1780"/>
<dbReference type="HOGENOM" id="CLU_007127_2_0_6"/>
<dbReference type="Proteomes" id="UP000001865">
    <property type="component" value="Chromosome"/>
</dbReference>
<dbReference type="GO" id="GO:0005886">
    <property type="term" value="C:plasma membrane"/>
    <property type="evidence" value="ECO:0007669"/>
    <property type="project" value="UniProtKB-SubCell"/>
</dbReference>
<dbReference type="GO" id="GO:0050897">
    <property type="term" value="F:cobalt ion binding"/>
    <property type="evidence" value="ECO:0007669"/>
    <property type="project" value="TreeGrafter"/>
</dbReference>
<dbReference type="GO" id="GO:0015087">
    <property type="term" value="F:cobalt ion transmembrane transporter activity"/>
    <property type="evidence" value="ECO:0007669"/>
    <property type="project" value="TreeGrafter"/>
</dbReference>
<dbReference type="GO" id="GO:0000287">
    <property type="term" value="F:magnesium ion binding"/>
    <property type="evidence" value="ECO:0007669"/>
    <property type="project" value="TreeGrafter"/>
</dbReference>
<dbReference type="GO" id="GO:0015095">
    <property type="term" value="F:magnesium ion transmembrane transporter activity"/>
    <property type="evidence" value="ECO:0007669"/>
    <property type="project" value="TreeGrafter"/>
</dbReference>
<dbReference type="GO" id="GO:0005385">
    <property type="term" value="F:zinc ion transmembrane transporter activity"/>
    <property type="evidence" value="ECO:0007669"/>
    <property type="project" value="UniProtKB-UniRule"/>
</dbReference>
<dbReference type="CDD" id="cd12833">
    <property type="entry name" value="ZntB-like_1"/>
    <property type="match status" value="1"/>
</dbReference>
<dbReference type="FunFam" id="1.20.58.340:FF:000002">
    <property type="entry name" value="Zinc transport protein ZntB"/>
    <property type="match status" value="1"/>
</dbReference>
<dbReference type="FunFam" id="3.30.460.20:FF:000001">
    <property type="entry name" value="Zinc transport protein ZntB"/>
    <property type="match status" value="1"/>
</dbReference>
<dbReference type="Gene3D" id="3.30.460.20">
    <property type="entry name" value="CorA soluble domain-like"/>
    <property type="match status" value="1"/>
</dbReference>
<dbReference type="Gene3D" id="1.20.58.340">
    <property type="entry name" value="Magnesium transport protein CorA, transmembrane region"/>
    <property type="match status" value="2"/>
</dbReference>
<dbReference type="HAMAP" id="MF_01565">
    <property type="entry name" value="ZntB"/>
    <property type="match status" value="1"/>
</dbReference>
<dbReference type="InterPro" id="IPR045861">
    <property type="entry name" value="CorA_cytoplasmic_dom"/>
</dbReference>
<dbReference type="InterPro" id="IPR045863">
    <property type="entry name" value="CorA_TM1_TM2"/>
</dbReference>
<dbReference type="InterPro" id="IPR002523">
    <property type="entry name" value="MgTranspt_CorA/ZnTranspt_ZntB"/>
</dbReference>
<dbReference type="InterPro" id="IPR023714">
    <property type="entry name" value="Zn_transp_ZntB"/>
</dbReference>
<dbReference type="NCBIfam" id="NF007092">
    <property type="entry name" value="PRK09546.1"/>
    <property type="match status" value="1"/>
</dbReference>
<dbReference type="PANTHER" id="PTHR46494">
    <property type="entry name" value="CORA FAMILY METAL ION TRANSPORTER (EUROFUNG)"/>
    <property type="match status" value="1"/>
</dbReference>
<dbReference type="PANTHER" id="PTHR46494:SF3">
    <property type="entry name" value="ZINC TRANSPORT PROTEIN ZNTB"/>
    <property type="match status" value="1"/>
</dbReference>
<dbReference type="Pfam" id="PF01544">
    <property type="entry name" value="CorA"/>
    <property type="match status" value="1"/>
</dbReference>
<dbReference type="SUPFAM" id="SSF143865">
    <property type="entry name" value="CorA soluble domain-like"/>
    <property type="match status" value="1"/>
</dbReference>
<dbReference type="SUPFAM" id="SSF144083">
    <property type="entry name" value="Magnesium transport protein CorA, transmembrane region"/>
    <property type="match status" value="1"/>
</dbReference>
<gene>
    <name evidence="1" type="primary">zntB</name>
    <name type="ordered locus">SeSA_A1780</name>
</gene>
<organism>
    <name type="scientific">Salmonella schwarzengrund (strain CVM19633)</name>
    <dbReference type="NCBI Taxonomy" id="439843"/>
    <lineage>
        <taxon>Bacteria</taxon>
        <taxon>Pseudomonadati</taxon>
        <taxon>Pseudomonadota</taxon>
        <taxon>Gammaproteobacteria</taxon>
        <taxon>Enterobacterales</taxon>
        <taxon>Enterobacteriaceae</taxon>
        <taxon>Salmonella</taxon>
    </lineage>
</organism>
<proteinExistence type="inferred from homology"/>
<accession>B4TWA8</accession>
<sequence>MEAIKGSDVNVPDAVFAWLLDGRGGVKPLEDNDVIDSQHPCWLHLNYTHPDSARWLASTPLLPNNVRDALAGESSRPRVSRMGEGTLITLRCINGSTDERPDQLVAMRLYMDERFIVSTRQRKVLALDDVVSDLQEGTGPVDCGGWLVDVCDALTDHASEFIEELHDKIIDLEDNLLDQQIPPRGFLALLRKQLIVMRRYMAPQRDVYARLASERLPWMSDDHRRRMQDIADRLGRGLDEIDACIARTGIMADEIAQVMQESLARRTYTMSLMAMVFLPSTFLTGLFGVNLGGIPGGGWRFGFSLFCILLVVLIGGVTLWLHRSKWL</sequence>
<name>ZNTB_SALSV</name>
<comment type="function">
    <text evidence="1">Zinc transporter. Acts as a Zn(2+):proton symporter, which likely mediates zinc ion uptake.</text>
</comment>
<comment type="catalytic activity">
    <reaction evidence="1">
        <text>Zn(2+)(out) + H(+)(out) = Zn(2+)(in) + H(+)(in)</text>
        <dbReference type="Rhea" id="RHEA:71195"/>
        <dbReference type="ChEBI" id="CHEBI:15378"/>
        <dbReference type="ChEBI" id="CHEBI:29105"/>
    </reaction>
    <physiologicalReaction direction="left-to-right" evidence="1">
        <dbReference type="Rhea" id="RHEA:71196"/>
    </physiologicalReaction>
</comment>
<comment type="subcellular location">
    <subcellularLocation>
        <location evidence="1">Cell inner membrane</location>
        <topology evidence="1">Multi-pass membrane protein</topology>
    </subcellularLocation>
</comment>
<comment type="similarity">
    <text evidence="1">Belongs to the CorA metal ion transporter (MIT) (TC 1.A.35) family.</text>
</comment>
<protein>
    <recommendedName>
        <fullName evidence="1">Zinc transport protein ZntB</fullName>
    </recommendedName>
</protein>
<evidence type="ECO:0000255" key="1">
    <source>
        <dbReference type="HAMAP-Rule" id="MF_01565"/>
    </source>
</evidence>
<keyword id="KW-0997">Cell inner membrane</keyword>
<keyword id="KW-1003">Cell membrane</keyword>
<keyword id="KW-0406">Ion transport</keyword>
<keyword id="KW-0472">Membrane</keyword>
<keyword id="KW-0812">Transmembrane</keyword>
<keyword id="KW-1133">Transmembrane helix</keyword>
<keyword id="KW-0813">Transport</keyword>
<keyword id="KW-0862">Zinc</keyword>
<reference key="1">
    <citation type="journal article" date="2011" name="J. Bacteriol.">
        <title>Comparative genomics of 28 Salmonella enterica isolates: evidence for CRISPR-mediated adaptive sublineage evolution.</title>
        <authorList>
            <person name="Fricke W.F."/>
            <person name="Mammel M.K."/>
            <person name="McDermott P.F."/>
            <person name="Tartera C."/>
            <person name="White D.G."/>
            <person name="Leclerc J.E."/>
            <person name="Ravel J."/>
            <person name="Cebula T.A."/>
        </authorList>
    </citation>
    <scope>NUCLEOTIDE SEQUENCE [LARGE SCALE GENOMIC DNA]</scope>
    <source>
        <strain>CVM19633</strain>
    </source>
</reference>